<name>UBIG_AZOC5</name>
<feature type="chain" id="PRO_1000072393" description="Ubiquinone biosynthesis O-methyltransferase">
    <location>
        <begin position="1"/>
        <end position="253"/>
    </location>
</feature>
<feature type="binding site" evidence="1">
    <location>
        <position position="41"/>
    </location>
    <ligand>
        <name>S-adenosyl-L-methionine</name>
        <dbReference type="ChEBI" id="CHEBI:59789"/>
    </ligand>
</feature>
<feature type="binding site" evidence="1">
    <location>
        <position position="72"/>
    </location>
    <ligand>
        <name>S-adenosyl-L-methionine</name>
        <dbReference type="ChEBI" id="CHEBI:59789"/>
    </ligand>
</feature>
<feature type="binding site" evidence="1">
    <location>
        <position position="93"/>
    </location>
    <ligand>
        <name>S-adenosyl-L-methionine</name>
        <dbReference type="ChEBI" id="CHEBI:59789"/>
    </ligand>
</feature>
<feature type="binding site" evidence="1">
    <location>
        <position position="136"/>
    </location>
    <ligand>
        <name>S-adenosyl-L-methionine</name>
        <dbReference type="ChEBI" id="CHEBI:59789"/>
    </ligand>
</feature>
<sequence length="253" mass="27514">MRMTANATIDPSEVARFDALGAQWWDPKGKMAPLHAINPVRLGFVRDVLVRHFGHDARSLRPLKGLRILDIGCGGGLLSEPLARMGADMVGVDPAPGNIVVAQSHADEAGVRVDYRQGTAEELADAGERFDVVLALEVVEHVADVGLFLRRAGEMVNPNGIMIVSTLNRTVKSFALAIVGAEYVLRWLPRGTHRWDKFITPAELEAEMGAAGFEMSELAGMVFDPLRGEWKIAADTDVNYFLVGKPAFHTSEG</sequence>
<reference key="1">
    <citation type="submission" date="2007-04" db="EMBL/GenBank/DDBJ databases">
        <title>Complete genome sequence of the nitrogen-fixing bacterium Azorhizobium caulinodans ORS571.</title>
        <authorList>
            <person name="Lee K.B."/>
            <person name="Backer P.D."/>
            <person name="Aono T."/>
            <person name="Liu C.T."/>
            <person name="Suzuki S."/>
            <person name="Suzuki T."/>
            <person name="Kaneko T."/>
            <person name="Yamada M."/>
            <person name="Tabata S."/>
            <person name="Kupfer D.M."/>
            <person name="Najar F.Z."/>
            <person name="Wiley G.B."/>
            <person name="Roe B."/>
            <person name="Binnewies T."/>
            <person name="Ussery D."/>
            <person name="Vereecke D."/>
            <person name="Gevers D."/>
            <person name="Holsters M."/>
            <person name="Oyaizu H."/>
        </authorList>
    </citation>
    <scope>NUCLEOTIDE SEQUENCE [LARGE SCALE GENOMIC DNA]</scope>
    <source>
        <strain>ATCC 43989 / DSM 5975 / JCM 20966 / LMG 6465 / NBRC 14845 / NCIMB 13405 / ORS 571</strain>
    </source>
</reference>
<dbReference type="EC" id="2.1.1.222" evidence="1"/>
<dbReference type="EC" id="2.1.1.64" evidence="1"/>
<dbReference type="EMBL" id="AP009384">
    <property type="protein sequence ID" value="BAF90298.1"/>
    <property type="molecule type" value="Genomic_DNA"/>
</dbReference>
<dbReference type="SMR" id="A8HVC4"/>
<dbReference type="STRING" id="438753.AZC_4300"/>
<dbReference type="KEGG" id="azc:AZC_4300"/>
<dbReference type="eggNOG" id="COG2227">
    <property type="taxonomic scope" value="Bacteria"/>
</dbReference>
<dbReference type="HOGENOM" id="CLU_042432_0_0_5"/>
<dbReference type="UniPathway" id="UPA00232"/>
<dbReference type="Proteomes" id="UP000000270">
    <property type="component" value="Chromosome"/>
</dbReference>
<dbReference type="GO" id="GO:0102208">
    <property type="term" value="F:2-polyprenyl-6-hydroxyphenol methylase activity"/>
    <property type="evidence" value="ECO:0007669"/>
    <property type="project" value="UniProtKB-EC"/>
</dbReference>
<dbReference type="GO" id="GO:0061542">
    <property type="term" value="F:3-demethylubiquinol 3-O-methyltransferase activity"/>
    <property type="evidence" value="ECO:0007669"/>
    <property type="project" value="UniProtKB-UniRule"/>
</dbReference>
<dbReference type="GO" id="GO:0010420">
    <property type="term" value="F:polyprenyldihydroxybenzoate methyltransferase activity"/>
    <property type="evidence" value="ECO:0007669"/>
    <property type="project" value="InterPro"/>
</dbReference>
<dbReference type="GO" id="GO:0032259">
    <property type="term" value="P:methylation"/>
    <property type="evidence" value="ECO:0007669"/>
    <property type="project" value="UniProtKB-KW"/>
</dbReference>
<dbReference type="CDD" id="cd02440">
    <property type="entry name" value="AdoMet_MTases"/>
    <property type="match status" value="1"/>
</dbReference>
<dbReference type="Gene3D" id="3.40.50.150">
    <property type="entry name" value="Vaccinia Virus protein VP39"/>
    <property type="match status" value="1"/>
</dbReference>
<dbReference type="HAMAP" id="MF_00472">
    <property type="entry name" value="UbiG"/>
    <property type="match status" value="1"/>
</dbReference>
<dbReference type="InterPro" id="IPR029063">
    <property type="entry name" value="SAM-dependent_MTases_sf"/>
</dbReference>
<dbReference type="InterPro" id="IPR010233">
    <property type="entry name" value="UbiG_MeTrfase"/>
</dbReference>
<dbReference type="NCBIfam" id="TIGR01983">
    <property type="entry name" value="UbiG"/>
    <property type="match status" value="1"/>
</dbReference>
<dbReference type="PANTHER" id="PTHR43464">
    <property type="entry name" value="METHYLTRANSFERASE"/>
    <property type="match status" value="1"/>
</dbReference>
<dbReference type="PANTHER" id="PTHR43464:SF19">
    <property type="entry name" value="UBIQUINONE BIOSYNTHESIS O-METHYLTRANSFERASE, MITOCHONDRIAL"/>
    <property type="match status" value="1"/>
</dbReference>
<dbReference type="Pfam" id="PF13489">
    <property type="entry name" value="Methyltransf_23"/>
    <property type="match status" value="1"/>
</dbReference>
<dbReference type="SUPFAM" id="SSF53335">
    <property type="entry name" value="S-adenosyl-L-methionine-dependent methyltransferases"/>
    <property type="match status" value="1"/>
</dbReference>
<keyword id="KW-0489">Methyltransferase</keyword>
<keyword id="KW-1185">Reference proteome</keyword>
<keyword id="KW-0949">S-adenosyl-L-methionine</keyword>
<keyword id="KW-0808">Transferase</keyword>
<keyword id="KW-0831">Ubiquinone biosynthesis</keyword>
<organism>
    <name type="scientific">Azorhizobium caulinodans (strain ATCC 43989 / DSM 5975 / JCM 20966 / LMG 6465 / NBRC 14845 / NCIMB 13405 / ORS 571)</name>
    <dbReference type="NCBI Taxonomy" id="438753"/>
    <lineage>
        <taxon>Bacteria</taxon>
        <taxon>Pseudomonadati</taxon>
        <taxon>Pseudomonadota</taxon>
        <taxon>Alphaproteobacteria</taxon>
        <taxon>Hyphomicrobiales</taxon>
        <taxon>Xanthobacteraceae</taxon>
        <taxon>Azorhizobium</taxon>
    </lineage>
</organism>
<proteinExistence type="inferred from homology"/>
<gene>
    <name evidence="1" type="primary">ubiG</name>
    <name type="ordered locus">AZC_4300</name>
</gene>
<accession>A8HVC4</accession>
<evidence type="ECO:0000255" key="1">
    <source>
        <dbReference type="HAMAP-Rule" id="MF_00472"/>
    </source>
</evidence>
<protein>
    <recommendedName>
        <fullName evidence="1">Ubiquinone biosynthesis O-methyltransferase</fullName>
    </recommendedName>
    <alternativeName>
        <fullName evidence="1">2-polyprenyl-6-hydroxyphenol methylase</fullName>
        <ecNumber evidence="1">2.1.1.222</ecNumber>
    </alternativeName>
    <alternativeName>
        <fullName evidence="1">3-demethylubiquinone 3-O-methyltransferase</fullName>
        <ecNumber evidence="1">2.1.1.64</ecNumber>
    </alternativeName>
</protein>
<comment type="function">
    <text evidence="1">O-methyltransferase that catalyzes the 2 O-methylation steps in the ubiquinone biosynthetic pathway.</text>
</comment>
<comment type="catalytic activity">
    <reaction evidence="1">
        <text>a 3-demethylubiquinol + S-adenosyl-L-methionine = a ubiquinol + S-adenosyl-L-homocysteine + H(+)</text>
        <dbReference type="Rhea" id="RHEA:44380"/>
        <dbReference type="Rhea" id="RHEA-COMP:9566"/>
        <dbReference type="Rhea" id="RHEA-COMP:10914"/>
        <dbReference type="ChEBI" id="CHEBI:15378"/>
        <dbReference type="ChEBI" id="CHEBI:17976"/>
        <dbReference type="ChEBI" id="CHEBI:57856"/>
        <dbReference type="ChEBI" id="CHEBI:59789"/>
        <dbReference type="ChEBI" id="CHEBI:84422"/>
        <dbReference type="EC" id="2.1.1.64"/>
    </reaction>
</comment>
<comment type="catalytic activity">
    <reaction evidence="1">
        <text>a 3-(all-trans-polyprenyl)benzene-1,2-diol + S-adenosyl-L-methionine = a 2-methoxy-6-(all-trans-polyprenyl)phenol + S-adenosyl-L-homocysteine + H(+)</text>
        <dbReference type="Rhea" id="RHEA:31411"/>
        <dbReference type="Rhea" id="RHEA-COMP:9550"/>
        <dbReference type="Rhea" id="RHEA-COMP:9551"/>
        <dbReference type="ChEBI" id="CHEBI:15378"/>
        <dbReference type="ChEBI" id="CHEBI:57856"/>
        <dbReference type="ChEBI" id="CHEBI:59789"/>
        <dbReference type="ChEBI" id="CHEBI:62729"/>
        <dbReference type="ChEBI" id="CHEBI:62731"/>
        <dbReference type="EC" id="2.1.1.222"/>
    </reaction>
</comment>
<comment type="pathway">
    <text evidence="1">Cofactor biosynthesis; ubiquinone biosynthesis.</text>
</comment>
<comment type="similarity">
    <text evidence="1">Belongs to the methyltransferase superfamily. UbiG/COQ3 family.</text>
</comment>